<name>RNPA_STAA8</name>
<organism>
    <name type="scientific">Staphylococcus aureus (strain NCTC 8325 / PS 47)</name>
    <dbReference type="NCBI Taxonomy" id="93061"/>
    <lineage>
        <taxon>Bacteria</taxon>
        <taxon>Bacillati</taxon>
        <taxon>Bacillota</taxon>
        <taxon>Bacilli</taxon>
        <taxon>Bacillales</taxon>
        <taxon>Staphylococcaceae</taxon>
        <taxon>Staphylococcus</taxon>
    </lineage>
</organism>
<accession>Q2FUQ1</accession>
<evidence type="ECO:0000255" key="1">
    <source>
        <dbReference type="HAMAP-Rule" id="MF_00227"/>
    </source>
</evidence>
<evidence type="ECO:0000269" key="2">
    <source>
    </source>
</evidence>
<evidence type="ECO:0000305" key="3"/>
<keyword id="KW-0255">Endonuclease</keyword>
<keyword id="KW-0378">Hydrolase</keyword>
<keyword id="KW-0540">Nuclease</keyword>
<keyword id="KW-1185">Reference proteome</keyword>
<keyword id="KW-0694">RNA-binding</keyword>
<keyword id="KW-0819">tRNA processing</keyword>
<proteinExistence type="evidence at protein level"/>
<gene>
    <name evidence="1" type="primary">rnpA</name>
    <name type="ordered locus">SAOUHSC_03054</name>
</gene>
<feature type="chain" id="PRO_1000021471" description="Ribonuclease P protein component">
    <location>
        <begin position="1"/>
        <end position="117"/>
    </location>
</feature>
<reference key="1">
    <citation type="book" date="2006" name="Gram positive pathogens, 2nd edition">
        <title>The Staphylococcus aureus NCTC 8325 genome.</title>
        <editorList>
            <person name="Fischetti V."/>
            <person name="Novick R."/>
            <person name="Ferretti J."/>
            <person name="Portnoy D."/>
            <person name="Rood J."/>
        </editorList>
        <authorList>
            <person name="Gillaspy A.F."/>
            <person name="Worrell V."/>
            <person name="Orvis J."/>
            <person name="Roe B.A."/>
            <person name="Dyer D.W."/>
            <person name="Iandolo J.J."/>
        </authorList>
    </citation>
    <scope>NUCLEOTIDE SEQUENCE [LARGE SCALE GENOMIC DNA]</scope>
    <source>
        <strain>NCTC 8325 / PS 47</strain>
    </source>
</reference>
<reference key="2">
    <citation type="journal article" date="2011" name="J. Bacteriol.">
        <title>Characterization of components of the Staphylococcus aureus mRNA degradosome holoenzyme-like complex.</title>
        <authorList>
            <person name="Roux C.M."/>
            <person name="DeMuth J.P."/>
            <person name="Dunman P.M."/>
        </authorList>
    </citation>
    <scope>INTERACTION WITH CSHA</scope>
    <scope>SUBUNIT</scope>
    <source>
        <strain>UAMS-1</strain>
    </source>
</reference>
<protein>
    <recommendedName>
        <fullName evidence="1">Ribonuclease P protein component</fullName>
        <shortName evidence="1">RNase P protein</shortName>
        <shortName evidence="1">RNaseP protein</shortName>
        <ecNumber evidence="1">3.1.26.5</ecNumber>
    </recommendedName>
    <alternativeName>
        <fullName evidence="1">Protein C5</fullName>
    </alternativeName>
</protein>
<comment type="function">
    <text evidence="1">RNaseP catalyzes the removal of the 5'-leader sequence from pre-tRNA to produce the mature 5'-terminus. It can also cleave other RNA substrates such as 4.5S RNA. The protein component plays an auxiliary but essential role in vivo by binding to the 5'-leader sequence and broadening the substrate specificity of the ribozyme.</text>
</comment>
<comment type="catalytic activity">
    <reaction evidence="1">
        <text>Endonucleolytic cleavage of RNA, removing 5'-extranucleotides from tRNA precursor.</text>
        <dbReference type="EC" id="3.1.26.5"/>
    </reaction>
</comment>
<comment type="subunit">
    <text evidence="1 2 3">Consists of a catalytic RNA component (M1 or rnpB) and a protein subunit (By similarity). Homodimer (Probable). Component of a possible RNA degradosome complex composed of cshA, eno, pfkA, pnp, rnjA, rnjB, rnpA and rny. Interacts specifically with RNA helicase CshA.</text>
</comment>
<comment type="similarity">
    <text evidence="1">Belongs to the RnpA family.</text>
</comment>
<sequence>MLLEKAYRIKKNADFQRIYKKGHSVANRQFVVYTCNNKEIDHFRLGISVSKKLGNAVLRNKIKRAIRENFKVHKSHILAKDIIVIARQPAKDMTTLQIQNSLEHVLKIAKVFNKKIK</sequence>
<dbReference type="EC" id="3.1.26.5" evidence="1"/>
<dbReference type="EMBL" id="CP000253">
    <property type="protein sequence ID" value="ABD32036.1"/>
    <property type="molecule type" value="Genomic_DNA"/>
</dbReference>
<dbReference type="RefSeq" id="WP_001789343.1">
    <property type="nucleotide sequence ID" value="NZ_LS483365.1"/>
</dbReference>
<dbReference type="RefSeq" id="YP_501499.1">
    <property type="nucleotide sequence ID" value="NC_007795.1"/>
</dbReference>
<dbReference type="SMR" id="Q2FUQ1"/>
<dbReference type="STRING" id="93061.SAOUHSC_03054"/>
<dbReference type="PaxDb" id="1280-SAXN108_2991"/>
<dbReference type="GeneID" id="3921317"/>
<dbReference type="KEGG" id="sao:SAOUHSC_03054"/>
<dbReference type="PATRIC" id="fig|93061.5.peg.2759"/>
<dbReference type="eggNOG" id="COG0594">
    <property type="taxonomic scope" value="Bacteria"/>
</dbReference>
<dbReference type="HOGENOM" id="CLU_117179_9_1_9"/>
<dbReference type="OrthoDB" id="9810867at2"/>
<dbReference type="Proteomes" id="UP000008816">
    <property type="component" value="Chromosome"/>
</dbReference>
<dbReference type="GO" id="GO:0030677">
    <property type="term" value="C:ribonuclease P complex"/>
    <property type="evidence" value="ECO:0000318"/>
    <property type="project" value="GO_Central"/>
</dbReference>
<dbReference type="GO" id="GO:0042781">
    <property type="term" value="F:3'-tRNA processing endoribonuclease activity"/>
    <property type="evidence" value="ECO:0000318"/>
    <property type="project" value="GO_Central"/>
</dbReference>
<dbReference type="GO" id="GO:0004526">
    <property type="term" value="F:ribonuclease P activity"/>
    <property type="evidence" value="ECO:0000318"/>
    <property type="project" value="GO_Central"/>
</dbReference>
<dbReference type="GO" id="GO:0000049">
    <property type="term" value="F:tRNA binding"/>
    <property type="evidence" value="ECO:0007669"/>
    <property type="project" value="UniProtKB-UniRule"/>
</dbReference>
<dbReference type="GO" id="GO:0042780">
    <property type="term" value="P:tRNA 3'-end processing"/>
    <property type="evidence" value="ECO:0000318"/>
    <property type="project" value="GO_Central"/>
</dbReference>
<dbReference type="GO" id="GO:0001682">
    <property type="term" value="P:tRNA 5'-leader removal"/>
    <property type="evidence" value="ECO:0007669"/>
    <property type="project" value="UniProtKB-UniRule"/>
</dbReference>
<dbReference type="FunFam" id="3.30.230.10:FF:000021">
    <property type="entry name" value="Ribonuclease P protein component"/>
    <property type="match status" value="1"/>
</dbReference>
<dbReference type="Gene3D" id="3.30.230.10">
    <property type="match status" value="1"/>
</dbReference>
<dbReference type="HAMAP" id="MF_00227">
    <property type="entry name" value="RNase_P"/>
    <property type="match status" value="1"/>
</dbReference>
<dbReference type="InterPro" id="IPR020568">
    <property type="entry name" value="Ribosomal_Su5_D2-typ_SF"/>
</dbReference>
<dbReference type="InterPro" id="IPR014721">
    <property type="entry name" value="Ribsml_uS5_D2-typ_fold_subgr"/>
</dbReference>
<dbReference type="InterPro" id="IPR000100">
    <property type="entry name" value="RNase_P"/>
</dbReference>
<dbReference type="InterPro" id="IPR020539">
    <property type="entry name" value="RNase_P_CS"/>
</dbReference>
<dbReference type="NCBIfam" id="TIGR00188">
    <property type="entry name" value="rnpA"/>
    <property type="match status" value="1"/>
</dbReference>
<dbReference type="PANTHER" id="PTHR33992">
    <property type="entry name" value="RIBONUCLEASE P PROTEIN COMPONENT"/>
    <property type="match status" value="1"/>
</dbReference>
<dbReference type="PANTHER" id="PTHR33992:SF1">
    <property type="entry name" value="RIBONUCLEASE P PROTEIN COMPONENT"/>
    <property type="match status" value="1"/>
</dbReference>
<dbReference type="Pfam" id="PF00825">
    <property type="entry name" value="Ribonuclease_P"/>
    <property type="match status" value="1"/>
</dbReference>
<dbReference type="SUPFAM" id="SSF54211">
    <property type="entry name" value="Ribosomal protein S5 domain 2-like"/>
    <property type="match status" value="1"/>
</dbReference>
<dbReference type="PROSITE" id="PS00648">
    <property type="entry name" value="RIBONUCLEASE_P"/>
    <property type="match status" value="1"/>
</dbReference>